<organism>
    <name type="scientific">Nasturtium officinale</name>
    <name type="common">Watercress</name>
    <name type="synonym">Rorippa nasturtium-aquaticum</name>
    <dbReference type="NCBI Taxonomy" id="65948"/>
    <lineage>
        <taxon>Eukaryota</taxon>
        <taxon>Viridiplantae</taxon>
        <taxon>Streptophyta</taxon>
        <taxon>Embryophyta</taxon>
        <taxon>Tracheophyta</taxon>
        <taxon>Spermatophyta</taxon>
        <taxon>Magnoliopsida</taxon>
        <taxon>eudicotyledons</taxon>
        <taxon>Gunneridae</taxon>
        <taxon>Pentapetalae</taxon>
        <taxon>rosids</taxon>
        <taxon>malvids</taxon>
        <taxon>Brassicales</taxon>
        <taxon>Brassicaceae</taxon>
        <taxon>Cardamineae</taxon>
        <taxon>Nasturtium</taxon>
    </lineage>
</organism>
<geneLocation type="chloroplast"/>
<keyword id="KW-0004">4Fe-4S</keyword>
<keyword id="KW-0148">Chlorophyll</keyword>
<keyword id="KW-0150">Chloroplast</keyword>
<keyword id="KW-0157">Chromophore</keyword>
<keyword id="KW-0249">Electron transport</keyword>
<keyword id="KW-0408">Iron</keyword>
<keyword id="KW-0411">Iron-sulfur</keyword>
<keyword id="KW-0460">Magnesium</keyword>
<keyword id="KW-0472">Membrane</keyword>
<keyword id="KW-0479">Metal-binding</keyword>
<keyword id="KW-0560">Oxidoreductase</keyword>
<keyword id="KW-0602">Photosynthesis</keyword>
<keyword id="KW-0603">Photosystem I</keyword>
<keyword id="KW-0934">Plastid</keyword>
<keyword id="KW-0793">Thylakoid</keyword>
<keyword id="KW-0812">Transmembrane</keyword>
<keyword id="KW-1133">Transmembrane helix</keyword>
<keyword id="KW-0813">Transport</keyword>
<name>PSAB_NASOF</name>
<accession>A4QLT2</accession>
<evidence type="ECO:0000255" key="1">
    <source>
        <dbReference type="HAMAP-Rule" id="MF_00482"/>
    </source>
</evidence>
<feature type="chain" id="PRO_0000300051" description="Photosystem I P700 chlorophyll a apoprotein A2">
    <location>
        <begin position="1"/>
        <end position="734"/>
    </location>
</feature>
<feature type="transmembrane region" description="Helical; Name=I" evidence="1">
    <location>
        <begin position="46"/>
        <end position="69"/>
    </location>
</feature>
<feature type="transmembrane region" description="Helical; Name=II" evidence="1">
    <location>
        <begin position="135"/>
        <end position="158"/>
    </location>
</feature>
<feature type="transmembrane region" description="Helical; Name=III" evidence="1">
    <location>
        <begin position="175"/>
        <end position="199"/>
    </location>
</feature>
<feature type="transmembrane region" description="Helical; Name=IV" evidence="1">
    <location>
        <begin position="273"/>
        <end position="291"/>
    </location>
</feature>
<feature type="transmembrane region" description="Helical; Name=V" evidence="1">
    <location>
        <begin position="330"/>
        <end position="353"/>
    </location>
</feature>
<feature type="transmembrane region" description="Helical; Name=VI" evidence="1">
    <location>
        <begin position="369"/>
        <end position="395"/>
    </location>
</feature>
<feature type="transmembrane region" description="Helical; Name=VII" evidence="1">
    <location>
        <begin position="417"/>
        <end position="439"/>
    </location>
</feature>
<feature type="transmembrane region" description="Helical; Name=VIII" evidence="1">
    <location>
        <begin position="517"/>
        <end position="535"/>
    </location>
</feature>
<feature type="transmembrane region" description="Helical; Name=IX" evidence="1">
    <location>
        <begin position="575"/>
        <end position="596"/>
    </location>
</feature>
<feature type="transmembrane region" description="Helical; Name=X" evidence="1">
    <location>
        <begin position="643"/>
        <end position="665"/>
    </location>
</feature>
<feature type="transmembrane region" description="Helical; Name=XI" evidence="1">
    <location>
        <begin position="707"/>
        <end position="727"/>
    </location>
</feature>
<feature type="binding site" evidence="1">
    <location>
        <position position="559"/>
    </location>
    <ligand>
        <name>[4Fe-4S] cluster</name>
        <dbReference type="ChEBI" id="CHEBI:49883"/>
        <note>ligand shared between dimeric partners</note>
    </ligand>
</feature>
<feature type="binding site" evidence="1">
    <location>
        <position position="568"/>
    </location>
    <ligand>
        <name>[4Fe-4S] cluster</name>
        <dbReference type="ChEBI" id="CHEBI:49883"/>
        <note>ligand shared between dimeric partners</note>
    </ligand>
</feature>
<feature type="binding site" description="axial binding residue" evidence="1">
    <location>
        <position position="654"/>
    </location>
    <ligand>
        <name>chlorophyll a</name>
        <dbReference type="ChEBI" id="CHEBI:58416"/>
        <label>B1</label>
    </ligand>
    <ligandPart>
        <name>Mg</name>
        <dbReference type="ChEBI" id="CHEBI:25107"/>
    </ligandPart>
</feature>
<feature type="binding site" description="axial binding residue" evidence="1">
    <location>
        <position position="662"/>
    </location>
    <ligand>
        <name>chlorophyll a</name>
        <dbReference type="ChEBI" id="CHEBI:58416"/>
        <label>B3</label>
    </ligand>
    <ligandPart>
        <name>Mg</name>
        <dbReference type="ChEBI" id="CHEBI:25107"/>
    </ligandPart>
</feature>
<feature type="binding site" evidence="1">
    <location>
        <position position="670"/>
    </location>
    <ligand>
        <name>chlorophyll a</name>
        <dbReference type="ChEBI" id="CHEBI:58416"/>
        <label>B3</label>
    </ligand>
</feature>
<feature type="binding site" evidence="1">
    <location>
        <position position="671"/>
    </location>
    <ligand>
        <name>phylloquinone</name>
        <dbReference type="ChEBI" id="CHEBI:18067"/>
        <label>B</label>
    </ligand>
</feature>
<protein>
    <recommendedName>
        <fullName evidence="1">Photosystem I P700 chlorophyll a apoprotein A2</fullName>
        <ecNumber evidence="1">1.97.1.12</ecNumber>
    </recommendedName>
    <alternativeName>
        <fullName evidence="1">PSI-B</fullName>
    </alternativeName>
    <alternativeName>
        <fullName evidence="1">PsaB</fullName>
    </alternativeName>
</protein>
<dbReference type="EC" id="1.97.1.12" evidence="1"/>
<dbReference type="EMBL" id="AP009376">
    <property type="protein sequence ID" value="BAF50637.1"/>
    <property type="molecule type" value="Genomic_DNA"/>
</dbReference>
<dbReference type="RefSeq" id="YP_001123813.1">
    <property type="nucleotide sequence ID" value="NC_009275.1"/>
</dbReference>
<dbReference type="SMR" id="A4QLT2"/>
<dbReference type="GeneID" id="4962139"/>
<dbReference type="GO" id="GO:0009535">
    <property type="term" value="C:chloroplast thylakoid membrane"/>
    <property type="evidence" value="ECO:0007669"/>
    <property type="project" value="UniProtKB-SubCell"/>
</dbReference>
<dbReference type="GO" id="GO:0009522">
    <property type="term" value="C:photosystem I"/>
    <property type="evidence" value="ECO:0007669"/>
    <property type="project" value="UniProtKB-KW"/>
</dbReference>
<dbReference type="GO" id="GO:0051539">
    <property type="term" value="F:4 iron, 4 sulfur cluster binding"/>
    <property type="evidence" value="ECO:0007669"/>
    <property type="project" value="UniProtKB-KW"/>
</dbReference>
<dbReference type="GO" id="GO:0016168">
    <property type="term" value="F:chlorophyll binding"/>
    <property type="evidence" value="ECO:0007669"/>
    <property type="project" value="UniProtKB-KW"/>
</dbReference>
<dbReference type="GO" id="GO:0009055">
    <property type="term" value="F:electron transfer activity"/>
    <property type="evidence" value="ECO:0007669"/>
    <property type="project" value="UniProtKB-UniRule"/>
</dbReference>
<dbReference type="GO" id="GO:0000287">
    <property type="term" value="F:magnesium ion binding"/>
    <property type="evidence" value="ECO:0007669"/>
    <property type="project" value="UniProtKB-UniRule"/>
</dbReference>
<dbReference type="GO" id="GO:0016491">
    <property type="term" value="F:oxidoreductase activity"/>
    <property type="evidence" value="ECO:0007669"/>
    <property type="project" value="UniProtKB-KW"/>
</dbReference>
<dbReference type="GO" id="GO:0015979">
    <property type="term" value="P:photosynthesis"/>
    <property type="evidence" value="ECO:0007669"/>
    <property type="project" value="UniProtKB-UniRule"/>
</dbReference>
<dbReference type="FunFam" id="1.20.1130.10:FF:000001">
    <property type="entry name" value="Photosystem I P700 chlorophyll a apoprotein A2"/>
    <property type="match status" value="1"/>
</dbReference>
<dbReference type="Gene3D" id="1.20.1130.10">
    <property type="entry name" value="Photosystem I PsaA/PsaB"/>
    <property type="match status" value="1"/>
</dbReference>
<dbReference type="HAMAP" id="MF_00482">
    <property type="entry name" value="PSI_PsaB"/>
    <property type="match status" value="1"/>
</dbReference>
<dbReference type="InterPro" id="IPR001280">
    <property type="entry name" value="PSI_PsaA/B"/>
</dbReference>
<dbReference type="InterPro" id="IPR020586">
    <property type="entry name" value="PSI_PsaA/B_CS"/>
</dbReference>
<dbReference type="InterPro" id="IPR036408">
    <property type="entry name" value="PSI_PsaA/B_sf"/>
</dbReference>
<dbReference type="InterPro" id="IPR006244">
    <property type="entry name" value="PSI_PsaB"/>
</dbReference>
<dbReference type="NCBIfam" id="TIGR01336">
    <property type="entry name" value="psaB"/>
    <property type="match status" value="1"/>
</dbReference>
<dbReference type="PANTHER" id="PTHR30128">
    <property type="entry name" value="OUTER MEMBRANE PROTEIN, OMPA-RELATED"/>
    <property type="match status" value="1"/>
</dbReference>
<dbReference type="PANTHER" id="PTHR30128:SF19">
    <property type="entry name" value="PHOTOSYSTEM I P700 CHLOROPHYLL A APOPROTEIN A1-RELATED"/>
    <property type="match status" value="1"/>
</dbReference>
<dbReference type="Pfam" id="PF00223">
    <property type="entry name" value="PsaA_PsaB"/>
    <property type="match status" value="1"/>
</dbReference>
<dbReference type="PIRSF" id="PIRSF002905">
    <property type="entry name" value="PSI_A"/>
    <property type="match status" value="1"/>
</dbReference>
<dbReference type="PRINTS" id="PR00257">
    <property type="entry name" value="PHOTSYSPSAAB"/>
</dbReference>
<dbReference type="SUPFAM" id="SSF81558">
    <property type="entry name" value="Photosystem I subunits PsaA/PsaB"/>
    <property type="match status" value="1"/>
</dbReference>
<dbReference type="PROSITE" id="PS00419">
    <property type="entry name" value="PHOTOSYSTEM_I_PSAAB"/>
    <property type="match status" value="1"/>
</dbReference>
<gene>
    <name evidence="1" type="primary">psaB</name>
</gene>
<reference key="1">
    <citation type="submission" date="2007-03" db="EMBL/GenBank/DDBJ databases">
        <title>Sequencing analysis of Nasturtium officinale chloroplast DNA.</title>
        <authorList>
            <person name="Hosouchi T."/>
            <person name="Tsuruoka H."/>
            <person name="Kotani H."/>
        </authorList>
    </citation>
    <scope>NUCLEOTIDE SEQUENCE [LARGE SCALE GENOMIC DNA]</scope>
</reference>
<sequence>MALRFPRFSQGLAQDPTTRRIWFGIATAHDFESHDDITEERLYQNIFASHFGQLAIIFLWTSGNLFHVAWQGNFETWVQDPLHVRPIAHAIWDPHFGQPAVEAFTRGGALGPVNIAYSGVYQWWYTIGLRTNEDLYTGALFLLFLSALSLIGGWLHLQPKWKPRVSWFKNAESRLNHHLSGLFGVSSLAWTGHLVHVAIPASRGESVRWNNFLNVLPHPQGLGPLFTGQWNLYAQNPDSSSHLFGTSQGSGTAILTLLGGFHPQTQSLWLTDMAHHHLAIAILFLIAGHMYRTNFGIGHSIKDLLEAHIPPGGRLGRGHKGLYDTINNSIHFQLGLALASLGVITSLVAQHMYSLPAYAFIAQDFTTQAALYTHHQYIAGFIMTGAFAHGAIFFIRDYNPEQNEDNVLARMLDHKEAIISHLSWASLFLGFHTLGLYVHNDVMLAFGTPEKQILIEPIFAQWIQSAHGKTSYGFDVLLSSTSGPAFNAGRSIWLPGWLNAINENSNSLFLTIGPGDFLVHHAIALGLHTTTLILVKGALDARGSKLMPDKKDFGYSFPCDGPGRGGTCDISAWDAFYLAVFWMLNTIGWVTFYWHWKHITLWQGNVSQFNESSTYLMGWLRDYLWLNSSQLINGYNPFGMNSLSVWAWMFLFGHLVWATGFMFLISWRGYWQELIETLAWAHERTPLANLIRWKDKPVALSIVQARLVGLAHFSVGYIFTYAAFLIASTSGKFG</sequence>
<proteinExistence type="inferred from homology"/>
<comment type="function">
    <text evidence="1">PsaA and PsaB bind P700, the primary electron donor of photosystem I (PSI), as well as the electron acceptors A0, A1 and FX. PSI is a plastocyanin-ferredoxin oxidoreductase, converting photonic excitation into a charge separation, which transfers an electron from the donor P700 chlorophyll pair to the spectroscopically characterized acceptors A0, A1, FX, FA and FB in turn. Oxidized P700 is reduced on the lumenal side of the thylakoid membrane by plastocyanin.</text>
</comment>
<comment type="catalytic activity">
    <reaction evidence="1">
        <text>reduced [plastocyanin] + hnu + oxidized [2Fe-2S]-[ferredoxin] = oxidized [plastocyanin] + reduced [2Fe-2S]-[ferredoxin]</text>
        <dbReference type="Rhea" id="RHEA:30407"/>
        <dbReference type="Rhea" id="RHEA-COMP:10000"/>
        <dbReference type="Rhea" id="RHEA-COMP:10001"/>
        <dbReference type="Rhea" id="RHEA-COMP:10039"/>
        <dbReference type="Rhea" id="RHEA-COMP:10040"/>
        <dbReference type="ChEBI" id="CHEBI:29036"/>
        <dbReference type="ChEBI" id="CHEBI:30212"/>
        <dbReference type="ChEBI" id="CHEBI:33737"/>
        <dbReference type="ChEBI" id="CHEBI:33738"/>
        <dbReference type="ChEBI" id="CHEBI:49552"/>
        <dbReference type="EC" id="1.97.1.12"/>
    </reaction>
</comment>
<comment type="cofactor">
    <text evidence="1">P700 is a chlorophyll a/chlorophyll a' dimer, A0 is one or more chlorophyll a, A1 is one or both phylloquinones and FX is a shared 4Fe-4S iron-sulfur center.</text>
</comment>
<comment type="subunit">
    <text evidence="1">The PsaA/B heterodimer binds the P700 chlorophyll special pair and subsequent electron acceptors. PSI consists of a core antenna complex that captures photons, and an electron transfer chain that converts photonic excitation into a charge separation. The eukaryotic PSI reaction center is composed of at least 11 subunits.</text>
</comment>
<comment type="subcellular location">
    <subcellularLocation>
        <location evidence="1">Plastid</location>
        <location evidence="1">Chloroplast thylakoid membrane</location>
        <topology evidence="1">Multi-pass membrane protein</topology>
    </subcellularLocation>
</comment>
<comment type="similarity">
    <text evidence="1">Belongs to the PsaA/PsaB family.</text>
</comment>